<geneLocation type="plasmid" evidence="12">
    <name>pGES-GZ</name>
</geneLocation>
<geneLocation type="plasmid" evidence="11">
    <name>pGES-5</name>
</geneLocation>
<gene>
    <name evidence="11" type="primary">blaGES-5</name>
    <name evidence="12" type="ORF">pGES-GZ_027</name>
</gene>
<accession>Q09HD0</accession>
<keyword id="KW-0002">3D-structure</keyword>
<keyword id="KW-0046">Antibiotic resistance</keyword>
<keyword id="KW-1015">Disulfide bond</keyword>
<keyword id="KW-0378">Hydrolase</keyword>
<keyword id="KW-0614">Plasmid</keyword>
<keyword id="KW-0964">Secreted</keyword>
<keyword id="KW-0732">Signal</keyword>
<proteinExistence type="evidence at protein level"/>
<comment type="function">
    <text evidence="3 5">Confers resistance to penicillins, cephalosporins and carbapenems (PubMed:20696873, PubMed:27590339). Has carbapenem-hydrolyzing activity (PubMed:27590339).</text>
</comment>
<comment type="catalytic activity">
    <reaction evidence="3 5">
        <text>a beta-lactam + H2O = a substituted beta-amino acid</text>
        <dbReference type="Rhea" id="RHEA:20401"/>
        <dbReference type="ChEBI" id="CHEBI:15377"/>
        <dbReference type="ChEBI" id="CHEBI:35627"/>
        <dbReference type="ChEBI" id="CHEBI:140347"/>
        <dbReference type="EC" id="3.5.2.6"/>
    </reaction>
</comment>
<comment type="activity regulation">
    <text evidence="3 4">Inhibited by the beta-lactamase-blocking agents clavulanic acid, sulbactam and tazobactam, via a covalent binding to Ser-64.</text>
</comment>
<comment type="biophysicochemical properties">
    <kinetics>
        <KM evidence="5">32 uM for ampicillin (at pH 7.0)</KM>
        <KM evidence="3">88.9 uM for benzylpenicillin (at pH 7.0 and 25 degrees Celsius)</KM>
        <KM evidence="5">85 uM for benzylpenicillin (at pH 7.0)</KM>
        <KM evidence="3">61.1 uM for cefalotin (at pH 7.0 and 25 degrees Celsius)</KM>
        <KM evidence="3">221 uM for cefoxitin (at pH 7.0 and 25 degrees Celsius)</KM>
        <KM evidence="3">135 uM for ceftazidime (at pH 7.0 and 25 degrees Celsius)</KM>
        <KM evidence="3">133 uM for cefotaxime (at pH 7.0 and 25 degrees Celsius)</KM>
        <KM evidence="3">1.27 uM for imipenem (at pH 7.0 and 25 degrees Celsius)</KM>
        <KM evidence="5">1.5 uM for imipenem (at pH 7.0)</KM>
        <text evidence="3 5">kcat is 27 sec(-1) with ampicillin as substrate (at pH 7.0) (PubMed:27590339). kcat is 28.6 sec(-1) with benzylpenicillin as substrate (at pH 7.0 and 25 degrees Celsius) (PubMed:20696873). kcat is 107 sec(-1) with benzylpenicillin as substrate (at pH 7.0) (PubMed:27590339). kcat is 167 sec(-1) with cefalotin as substrate (at pH 7.0 and 25 degrees Celsius) (PubMed:20696873). kcat is 7.5 sec(-1) with cefoxitin as substrate (at pH 7.0 and 25 degrees Celsius) (PubMed:20696873). kcat is 0.24 sec(-1) with ceftazidime as substrate (at pH 7.0 and 25 degrees Celsius) (PubMed:20696873). kcat is 3.55 sec(-1) with cefotaxime as substrate (at pH 7.0 and 25 degrees Celsius) (PubMed:20696873). kcat is 0.44 sec(-1) with imipenem as substrate (at pH 7.0) (PubMed:27590339). kcat is 0.33 sec(-1) with imipenem as substrate (at pH 7.0 and 25 degrees Celsius) (PubMed:20696873).</text>
    </kinetics>
</comment>
<comment type="subcellular location">
    <subcellularLocation>
        <location evidence="1">Secreted</location>
    </subcellularLocation>
</comment>
<comment type="miscellaneous">
    <text evidence="10">The class A beta-lactamase family has a specific amino-acid numbering system, sometimes called Ambler or ABL numbering and often misspelt as Amber. A multiple sequence alignment was used to derive a consensus sequence and then the consensus was numbered taking into account insertions and deletions. This allows use of identical numbers, e.g. for active site residues, despite differences in protein length. UniProt always uses natural numbering of residues, hence there appear to be differences in numbering between this entry and some papers.</text>
</comment>
<comment type="similarity">
    <text evidence="9">Belongs to the class-A beta-lactamase family.</text>
</comment>
<name>BLAG5_KLEPN</name>
<feature type="signal peptide" evidence="2">
    <location>
        <begin position="1"/>
        <end position="18"/>
    </location>
</feature>
<feature type="chain" id="PRO_5008528380" description="Beta-lactamase GES-5" evidence="2">
    <location>
        <begin position="19"/>
        <end position="287"/>
    </location>
</feature>
<feature type="active site" description="Nucleophile; acyl-ester intermediate" evidence="4 15">
    <location>
        <position position="64"/>
    </location>
</feature>
<feature type="binding site" evidence="4 15">
    <location>
        <position position="64"/>
    </location>
    <ligand>
        <name>imipenem</name>
        <dbReference type="ChEBI" id="CHEBI:190509"/>
    </ligand>
</feature>
<feature type="binding site" evidence="4 15">
    <location>
        <position position="125"/>
    </location>
    <ligand>
        <name>imipenem</name>
        <dbReference type="ChEBI" id="CHEBI:190509"/>
    </ligand>
</feature>
<feature type="binding site" evidence="4 15">
    <location>
        <position position="127"/>
    </location>
    <ligand>
        <name>imipenem</name>
        <dbReference type="ChEBI" id="CHEBI:190509"/>
    </ligand>
</feature>
<feature type="binding site" evidence="4 15">
    <location>
        <position position="230"/>
    </location>
    <ligand>
        <name>imipenem</name>
        <dbReference type="ChEBI" id="CHEBI:190509"/>
    </ligand>
</feature>
<feature type="binding site" evidence="4 15">
    <location>
        <position position="232"/>
    </location>
    <ligand>
        <name>imipenem</name>
        <dbReference type="ChEBI" id="CHEBI:190509"/>
    </ligand>
</feature>
<feature type="binding site" evidence="4 15">
    <location>
        <position position="238"/>
    </location>
    <ligand>
        <name>imipenem</name>
        <dbReference type="ChEBI" id="CHEBI:190509"/>
    </ligand>
</feature>
<feature type="disulfide bond" description="Involved in overall enzyme stability, but not essential for carbapenem-hydrolyzing activity" evidence="4 5 6 7 14 15 16 17 18 19">
    <location>
        <begin position="63"/>
        <end position="233"/>
    </location>
</feature>
<feature type="mutagenesis site" description="Abolishes resistance to ampicillin, benzylpenicillin, cephalothin or to carbapenem antibiotic, imipenem." evidence="5">
    <original>C</original>
    <variation>A</variation>
    <variation>L</variation>
    <variation>M</variation>
    <location>
        <position position="63"/>
    </location>
</feature>
<feature type="mutagenesis site" description="Slightly reduces catalytic efficiency with respect to carbapenem antibiotic, imipenem. No significant reduction in catalytic efficiency with respect to ampicillin, benzylpenicillin or cephalothin. Reduces resistance to ampicillin, benzylpenicillin or cephalothin about 4-fold, in JM83 E.coli strain." evidence="5">
    <original>C</original>
    <variation>G</variation>
    <location>
        <position position="63"/>
    </location>
</feature>
<feature type="mutagenesis site" description="Increases catalytic efficiency about 5-fold, with respect to cefoxitin. Increases catalytic efficiency about 30-fold, with respect to ceftazidime. Decreases catalytic efficiency about 6-fold, with respect to imipenem. Increases resistance to ceftazidime about 5-fold, in DH5alpha E.coli strain. Abolishes hydrolysis of imipenem; when associated with G-165. Decreases resistance to cefoxitin about 5-fold in DH5alpha E.coli strain; when associated with G-165. Decreases catalytic efficiency with respect to benzylpenicillin and cephalothin; when associated with N-165. Increases catalytic efficiency about 60-fold, with respect to ceftazidime; when associated with N-165. Decreases resistance to cefoxitin about 5-fold in DH5alpha E.coli strain; when associated with N-165. Increases resistance to ceftazidime about 40-fold in DH5alpha E.coli strain; when associated with N-165." evidence="3">
    <original>E</original>
    <variation>K</variation>
    <location>
        <position position="98"/>
    </location>
</feature>
<feature type="mutagenesis site" description="Decreases catalytic efficiency about 50-fold, with respect to imipenem. Abolishes hydrolysis of cefoxitin. Increases resistance to ceftazidime about 10-fold, in DH5alpha E.coli strain. Abolishes hydrolysis of imipenem; when associated with K-98. Decreases resistance to cefoxitin about 5-fold in DH5alpha E.coli strain; when associated with K-98." evidence="3">
    <original>S</original>
    <variation>G</variation>
    <location>
        <position position="165"/>
    </location>
</feature>
<feature type="mutagenesis site" description="Decreases catalytic efficiency about 5-fold with respect to benzylpenicillin. Decreases catalytic efficiency about 50-fold with respect to cefalotin. Abolishes hydrolysis of cefoxitin. Increases catalytic efficiency about 5-fold, with respect to cefotaxime. Decreases catalytic efficiency about 10-fold with respect to imipenem. Decreases catalytic efficiency with respect to benzylpenicillin and cephalothin; when associated with K-98. Increases catalytic efficiency about 60-fold, with respect to ceftazidime; when associated with K-98. Decreases resistance to cefoxitin about 5-fold in DH5alpha E.coli strain; when associated with K-98. Increases resistance to ceftazidime about 40-fold in DH5alpha E.coli strain; when associated with K-98." evidence="3">
    <original>S</original>
    <variation>N</variation>
    <location>
        <position position="165"/>
    </location>
</feature>
<feature type="helix" evidence="20">
    <location>
        <begin position="20"/>
        <end position="35"/>
    </location>
</feature>
<feature type="strand" evidence="20">
    <location>
        <begin position="38"/>
        <end position="44"/>
    </location>
</feature>
<feature type="strand" evidence="20">
    <location>
        <begin position="50"/>
        <end position="55"/>
    </location>
</feature>
<feature type="helix" evidence="20">
    <location>
        <begin position="63"/>
        <end position="66"/>
    </location>
</feature>
<feature type="helix" evidence="20">
    <location>
        <begin position="67"/>
        <end position="80"/>
    </location>
</feature>
<feature type="strand" evidence="20">
    <location>
        <begin position="88"/>
        <end position="90"/>
    </location>
</feature>
<feature type="helix" evidence="20">
    <location>
        <begin position="93"/>
        <end position="95"/>
    </location>
</feature>
<feature type="helix" evidence="20">
    <location>
        <begin position="101"/>
        <end position="106"/>
    </location>
</feature>
<feature type="turn" evidence="20">
    <location>
        <begin position="107"/>
        <end position="110"/>
    </location>
</feature>
<feature type="strand" evidence="20">
    <location>
        <begin position="111"/>
        <end position="113"/>
    </location>
</feature>
<feature type="helix" evidence="20">
    <location>
        <begin position="114"/>
        <end position="124"/>
    </location>
</feature>
<feature type="helix" evidence="20">
    <location>
        <begin position="127"/>
        <end position="137"/>
    </location>
</feature>
<feature type="helix" evidence="20">
    <location>
        <begin position="139"/>
        <end position="149"/>
    </location>
</feature>
<feature type="helix" evidence="20">
    <location>
        <begin position="163"/>
        <end position="165"/>
    </location>
</feature>
<feature type="helix" evidence="20">
    <location>
        <begin position="178"/>
        <end position="190"/>
    </location>
</feature>
<feature type="strand" evidence="20">
    <location>
        <begin position="191"/>
        <end position="194"/>
    </location>
</feature>
<feature type="helix" evidence="20">
    <location>
        <begin position="196"/>
        <end position="207"/>
    </location>
</feature>
<feature type="turn" evidence="21">
    <location>
        <begin position="213"/>
        <end position="215"/>
    </location>
</feature>
<feature type="helix" evidence="20">
    <location>
        <begin position="216"/>
        <end position="219"/>
    </location>
</feature>
<feature type="strand" evidence="20">
    <location>
        <begin position="224"/>
        <end position="233"/>
    </location>
</feature>
<feature type="helix" evidence="20">
    <location>
        <begin position="234"/>
        <end position="236"/>
    </location>
</feature>
<feature type="strand" evidence="20">
    <location>
        <begin position="237"/>
        <end position="246"/>
    </location>
</feature>
<feature type="strand" evidence="20">
    <location>
        <begin position="249"/>
        <end position="258"/>
    </location>
</feature>
<feature type="helix" evidence="20">
    <location>
        <begin position="264"/>
        <end position="284"/>
    </location>
</feature>
<reference evidence="11" key="1">
    <citation type="submission" date="2006-08" db="EMBL/GenBank/DDBJ databases">
        <authorList>
            <person name="O'Boyle S.T."/>
        </authorList>
    </citation>
    <scope>NUCLEOTIDE SEQUENCE [GENOMIC DNA]</scope>
    <source>
        <strain evidence="11">ChaK36</strain>
        <plasmid evidence="11">pGES-5</plasmid>
    </source>
</reference>
<reference evidence="12" key="2">
    <citation type="submission" date="2016-04" db="EMBL/GenBank/DDBJ databases">
        <title>Emergence and Characterization of GES-5-producing Klebsiella pneumoniae in China.</title>
        <authorList>
            <person name="Chen D.-Q."/>
            <person name="Wang Q."/>
        </authorList>
    </citation>
    <scope>NUCLEOTIDE SEQUENCE [GENOMIC DNA]</scope>
    <source>
        <strain evidence="12">KP01</strain>
        <plasmid evidence="12">pGES-GZ</plasmid>
    </source>
</reference>
<reference evidence="9" key="3">
    <citation type="journal article" date="1991" name="Biochem. J.">
        <title>A standard numbering scheme for the class A beta-lactamases.</title>
        <authorList>
            <person name="Ambler R.P."/>
            <person name="Coulson A.F."/>
            <person name="Frere J.M."/>
            <person name="Ghuysen J.M."/>
            <person name="Joris B."/>
            <person name="Forsman M."/>
            <person name="Levesque R.C."/>
            <person name="Tiraby G."/>
            <person name="Waley S.G."/>
        </authorList>
    </citation>
    <scope>AMINO ACID NUMBERING SCHEME</scope>
</reference>
<reference evidence="9" key="4">
    <citation type="journal article" date="2010" name="Antimicrob. Agents Chemother.">
        <title>Comparative biochemical and computational study of the role of naturally occurring mutations at Ambler positions 104 and 170 in GES beta-lactamases.</title>
        <authorList>
            <person name="Kotsakis S.D."/>
            <person name="Miriagou V."/>
            <person name="Tzelepi E."/>
            <person name="Tzouvelekis L.S."/>
        </authorList>
    </citation>
    <scope>FUNCTION</scope>
    <scope>CATALYTIC ACTIVITY</scope>
    <scope>ACTIVITY REGULATION</scope>
    <scope>BIOPHYSICOCHEMICAL PROPERTIES</scope>
    <scope>MUTAGENESIS OF GLU-98 AND SER-165</scope>
</reference>
<reference evidence="15" key="5">
    <citation type="journal article" date="2012" name="J. Am. Chem. Soc.">
        <title>Structural basis for progression toward the carbapenemase activity in the GES family of beta-lactamases.</title>
        <authorList>
            <person name="Smith C.A."/>
            <person name="Frase H."/>
            <person name="Toth M."/>
            <person name="Kumarasiri M."/>
            <person name="Wiafe K."/>
            <person name="Munoz J."/>
            <person name="Mobashery S."/>
            <person name="Vakulenko S.B."/>
        </authorList>
    </citation>
    <scope>X-RAY CRYSTALLOGRAPHY (1.25 ANGSTROMS) OF APO FORM AND IN COMPLEX WITH IMIPENEM</scope>
    <scope>ACTIVITY REGULATION</scope>
    <scope>ACTIVE SITE</scope>
    <scope>DISULFIDE BOND</scope>
</reference>
<reference evidence="13 16" key="6">
    <citation type="journal article" date="2016" name="J. Biol. Chem.">
        <title>Role of the Conserved Disulfide Bridge in Class A Carbapenemases.</title>
        <authorList>
            <person name="Smith C.A."/>
            <person name="Nossoni Z."/>
            <person name="Toth M."/>
            <person name="Stewart N.K."/>
            <person name="Frase H."/>
            <person name="Vakulenko S.B."/>
        </authorList>
    </citation>
    <scope>X-RAY CRYSTALLOGRAPHY (0.96 ANGSTROMS) OF APO FORM AND MUTANT GLY-63</scope>
    <scope>FUNCTION</scope>
    <scope>CATALYTIC ACTIVITY</scope>
    <scope>BIOPHYSICOCHEMICAL PROPERTIES</scope>
    <scope>DISULFIDE BOND</scope>
    <scope>MUTAGENESIS OF CYS-63</scope>
</reference>
<reference evidence="18" key="7">
    <citation type="journal article" date="2019" name="ACS Med. Chem. Lett.">
        <title>X-ray Crystallography Deciphers the Activity of Broad-Spectrum Boronic Acid beta-Lactamase Inhibitors.</title>
        <authorList>
            <person name="Cendron L."/>
            <person name="Quotadamo A."/>
            <person name="Maso L."/>
            <person name="Bellio P."/>
            <person name="Montanari M."/>
            <person name="Celenza G."/>
            <person name="Venturelli A."/>
            <person name="Costi M.P."/>
            <person name="Tondi D."/>
        </authorList>
    </citation>
    <scope>X-RAY CRYSTALLOGRAPHY (1.40 ANGSTROMS) OF 18-287 IN COMPLEX WITH BORONIC ACID INHIBITOR</scope>
    <scope>DISULFIDE BOND</scope>
</reference>
<reference evidence="19" key="8">
    <citation type="journal article" date="2020" name="Biomolecules">
        <title>Targeting the Class A Carbapenemase GES-5 via Virtual Screening.</title>
        <authorList>
            <person name="Klein R."/>
            <person name="Cendron L."/>
            <person name="Montanari M."/>
            <person name="Bellio P."/>
            <person name="Celenza G."/>
            <person name="Maso L."/>
            <person name="Tondi D."/>
            <person name="Brenk R."/>
        </authorList>
    </citation>
    <scope>X-RAY CRYSTALLOGRAPHY (1.55 ANGSTROMS)</scope>
    <scope>DISULFIDE BOND</scope>
</reference>
<protein>
    <recommendedName>
        <fullName evidence="8">Beta-lactamase GES-5</fullName>
        <ecNumber evidence="3 5">3.5.2.6</ecNumber>
    </recommendedName>
    <alternativeName>
        <fullName evidence="8">Class A carbapenemase GES-5</fullName>
    </alternativeName>
</protein>
<evidence type="ECO:0000250" key="1">
    <source>
        <dbReference type="UniProtKB" id="A0A5R8T042"/>
    </source>
</evidence>
<evidence type="ECO:0000255" key="2"/>
<evidence type="ECO:0000269" key="3">
    <source>
    </source>
</evidence>
<evidence type="ECO:0000269" key="4">
    <source>
    </source>
</evidence>
<evidence type="ECO:0000269" key="5">
    <source>
    </source>
</evidence>
<evidence type="ECO:0000269" key="6">
    <source>
    </source>
</evidence>
<evidence type="ECO:0000269" key="7">
    <source>
    </source>
</evidence>
<evidence type="ECO:0000303" key="8">
    <source>
    </source>
</evidence>
<evidence type="ECO:0000305" key="9"/>
<evidence type="ECO:0000305" key="10">
    <source>
    </source>
</evidence>
<evidence type="ECO:0000312" key="11">
    <source>
        <dbReference type="EMBL" id="ABI63577.1"/>
    </source>
</evidence>
<evidence type="ECO:0000312" key="12">
    <source>
        <dbReference type="EMBL" id="AKS10543.1"/>
    </source>
</evidence>
<evidence type="ECO:0000312" key="13">
    <source>
        <dbReference type="PDB" id="5F83"/>
    </source>
</evidence>
<evidence type="ECO:0007744" key="14">
    <source>
        <dbReference type="PDB" id="4GNU"/>
    </source>
</evidence>
<evidence type="ECO:0007744" key="15">
    <source>
        <dbReference type="PDB" id="4H8R"/>
    </source>
</evidence>
<evidence type="ECO:0007744" key="16">
    <source>
        <dbReference type="PDB" id="5F82"/>
    </source>
</evidence>
<evidence type="ECO:0007744" key="17">
    <source>
        <dbReference type="PDB" id="5F83"/>
    </source>
</evidence>
<evidence type="ECO:0007744" key="18">
    <source>
        <dbReference type="PDB" id="6Q35"/>
    </source>
</evidence>
<evidence type="ECO:0007744" key="19">
    <source>
        <dbReference type="PDB" id="6TS9"/>
    </source>
</evidence>
<evidence type="ECO:0007829" key="20">
    <source>
        <dbReference type="PDB" id="4H8R"/>
    </source>
</evidence>
<evidence type="ECO:0007829" key="21">
    <source>
        <dbReference type="PDB" id="6Q35"/>
    </source>
</evidence>
<sequence>MRFIHALLLAGIAHSAYASEKLTFKTDLEKLEREKAAQIGVAIVDPQGEIVAGHRMAQRFAMCSTFKFPLAALVFERIDSGTERGDRKLSYGPDMIVEWSPATERFLASGHMTVLEAAQAAVQLSDNGATNLLLREIGGPAAMTQYFRKIGDSVSRLDRKEPEMSDNTPGDLRDTTTPIAMARTVAKVLYGGALTSTSTHTIERWLIGNQTGDATLRAGFPKDWVVGEKTGTCANGGRNDIGFFKAQERDYAVAVYTTAPKLSAVERDELVASVGQVITQLILSTDK</sequence>
<organism evidence="12">
    <name type="scientific">Klebsiella pneumoniae</name>
    <dbReference type="NCBI Taxonomy" id="573"/>
    <lineage>
        <taxon>Bacteria</taxon>
        <taxon>Pseudomonadati</taxon>
        <taxon>Pseudomonadota</taxon>
        <taxon>Gammaproteobacteria</taxon>
        <taxon>Enterobacterales</taxon>
        <taxon>Enterobacteriaceae</taxon>
        <taxon>Klebsiella/Raoultella group</taxon>
        <taxon>Klebsiella</taxon>
        <taxon>Klebsiella pneumoniae complex</taxon>
    </lineage>
</organism>
<dbReference type="EC" id="3.5.2.6" evidence="3 5"/>
<dbReference type="EMBL" id="DQ902344">
    <property type="protein sequence ID" value="ABI63577.1"/>
    <property type="molecule type" value="Genomic_DNA"/>
</dbReference>
<dbReference type="EMBL" id="KT070138">
    <property type="protein sequence ID" value="AKS10543.1"/>
    <property type="molecule type" value="Genomic_DNA"/>
</dbReference>
<dbReference type="PDB" id="4GNU">
    <property type="method" value="X-ray"/>
    <property type="resolution" value="1.09 A"/>
    <property type="chains" value="A/B=1-287"/>
</dbReference>
<dbReference type="PDB" id="4H8R">
    <property type="method" value="X-ray"/>
    <property type="resolution" value="1.25 A"/>
    <property type="chains" value="A/B=1-287"/>
</dbReference>
<dbReference type="PDB" id="5F82">
    <property type="method" value="X-ray"/>
    <property type="resolution" value="0.96 A"/>
    <property type="chains" value="A/B=1-287"/>
</dbReference>
<dbReference type="PDB" id="5F83">
    <property type="method" value="X-ray"/>
    <property type="resolution" value="1.38 A"/>
    <property type="chains" value="A/B=4-270"/>
</dbReference>
<dbReference type="PDB" id="6Q35">
    <property type="method" value="X-ray"/>
    <property type="resolution" value="1.40 A"/>
    <property type="chains" value="A/B=18-287"/>
</dbReference>
<dbReference type="PDB" id="6TS9">
    <property type="method" value="X-ray"/>
    <property type="resolution" value="1.55 A"/>
    <property type="chains" value="A/B=1-287"/>
</dbReference>
<dbReference type="PDB" id="8V9G">
    <property type="method" value="X-ray"/>
    <property type="resolution" value="1.62 A"/>
    <property type="chains" value="A/B=1-284"/>
</dbReference>
<dbReference type="PDB" id="8V9H">
    <property type="method" value="X-ray"/>
    <property type="resolution" value="1.50 A"/>
    <property type="chains" value="A/B=1-287"/>
</dbReference>
<dbReference type="PDBsum" id="4GNU"/>
<dbReference type="PDBsum" id="4H8R"/>
<dbReference type="PDBsum" id="5F82"/>
<dbReference type="PDBsum" id="5F83"/>
<dbReference type="PDBsum" id="6Q35"/>
<dbReference type="PDBsum" id="6TS9"/>
<dbReference type="PDBsum" id="8V9G"/>
<dbReference type="PDBsum" id="8V9H"/>
<dbReference type="SMR" id="Q09HD0"/>
<dbReference type="CARD" id="ARO:3002334">
    <property type="molecule name" value="GES-5"/>
    <property type="mechanism identifier" value="ARO:0001004"/>
    <property type="mechanism name" value="antibiotic inactivation"/>
</dbReference>
<dbReference type="BRENDA" id="3.5.2.6">
    <property type="organism ID" value="2814"/>
</dbReference>
<dbReference type="EvolutionaryTrace" id="Q09HD0"/>
<dbReference type="GO" id="GO:0005576">
    <property type="term" value="C:extracellular region"/>
    <property type="evidence" value="ECO:0007669"/>
    <property type="project" value="UniProtKB-SubCell"/>
</dbReference>
<dbReference type="GO" id="GO:0008800">
    <property type="term" value="F:beta-lactamase activity"/>
    <property type="evidence" value="ECO:0007669"/>
    <property type="project" value="UniProtKB-EC"/>
</dbReference>
<dbReference type="GO" id="GO:0030655">
    <property type="term" value="P:beta-lactam antibiotic catabolic process"/>
    <property type="evidence" value="ECO:0007669"/>
    <property type="project" value="InterPro"/>
</dbReference>
<dbReference type="GO" id="GO:0046677">
    <property type="term" value="P:response to antibiotic"/>
    <property type="evidence" value="ECO:0007669"/>
    <property type="project" value="UniProtKB-KW"/>
</dbReference>
<dbReference type="Gene3D" id="3.40.710.10">
    <property type="entry name" value="DD-peptidase/beta-lactamase superfamily"/>
    <property type="match status" value="1"/>
</dbReference>
<dbReference type="InterPro" id="IPR012338">
    <property type="entry name" value="Beta-lactam/transpept-like"/>
</dbReference>
<dbReference type="InterPro" id="IPR045155">
    <property type="entry name" value="Beta-lactam_cat"/>
</dbReference>
<dbReference type="InterPro" id="IPR000871">
    <property type="entry name" value="Beta-lactam_class-A"/>
</dbReference>
<dbReference type="NCBIfam" id="NF033103">
    <property type="entry name" value="bla_class_A"/>
    <property type="match status" value="1"/>
</dbReference>
<dbReference type="NCBIfam" id="NF012103">
    <property type="entry name" value="blaGES"/>
    <property type="match status" value="1"/>
</dbReference>
<dbReference type="PANTHER" id="PTHR35333">
    <property type="entry name" value="BETA-LACTAMASE"/>
    <property type="match status" value="1"/>
</dbReference>
<dbReference type="PANTHER" id="PTHR35333:SF3">
    <property type="entry name" value="BETA-LACTAMASE-TYPE TRANSPEPTIDASE FOLD CONTAINING PROTEIN"/>
    <property type="match status" value="1"/>
</dbReference>
<dbReference type="Pfam" id="PF13354">
    <property type="entry name" value="Beta-lactamase2"/>
    <property type="match status" value="1"/>
</dbReference>
<dbReference type="PRINTS" id="PR00118">
    <property type="entry name" value="BLACTAMASEA"/>
</dbReference>
<dbReference type="SUPFAM" id="SSF56601">
    <property type="entry name" value="beta-lactamase/transpeptidase-like"/>
    <property type="match status" value="1"/>
</dbReference>